<comment type="function">
    <text evidence="5 6 7 9">Core component of multiple SCF (SKP1-CUL1-F-box protein) E3 ubiquitin-protein ligase complexes which mediate the ubiquitination of proteins involved in cell cycle progression, signal transduction and transcription. Through the RING-type zinc finger, seems to recruit the E2 ubiquitination enzyme to the complex and brings it into close proximity to the substrate. Required for the specific SCF-dependent proteolysis of CI, but not that of ARM, suggesting that it also participates in the selection of substrates inside the SCF complex (PubMed:12062088). During early metamorphosis, part of the SCF-slmb complex that negatively regulates the InR/PI3K/TOR pathway to activate the pruning of unnecessary larval ddaC dendrites and mushroom body axons (PubMed:24068890). The SCF-slmb complex also regulates asymmetrical division of neuroblasts and inhibits ectopic neuroblast formation partly through SAK and Akt1 (PubMed:24413555). Also part of an SCF complex required for caspase activation during sperm differentiation (Probable).</text>
</comment>
<comment type="pathway">
    <text>Protein modification; protein ubiquitination.</text>
</comment>
<comment type="subunit">
    <text evidence="4 6 7 9">Component of SCF E3 ubiquitin-protein ligase complexes consisting of Skpa, Cul1, Roc1a and an F-box protein. In larvae neuroblast self renewal and asymmetric division, as well as ddaC dendrite and mushroom body axon pruning, the complex contains the F-box protein slmb (SCF-slmb) (PubMed:24068890, PubMed:24413555). Interacts directly with Cul1 and Slmb (PubMed:11500045). In caspase activation during sperm differentiation, the complex contains the F-box protein ntc (Probable).</text>
</comment>
<comment type="subcellular location">
    <subcellularLocation>
        <location>Cytoplasm</location>
    </subcellularLocation>
    <subcellularLocation>
        <location>Nucleus</location>
    </subcellularLocation>
</comment>
<comment type="tissue specificity">
    <text evidence="5">Widely expressed. Expressed in embryonic, larval and adult tissues.</text>
</comment>
<comment type="developmental stage">
    <text evidence="5">Expressed both maternally and zygotically.</text>
</comment>
<comment type="domain">
    <text evidence="1">The RING-type zinc finger domain is essential for ubiquitin ligase activity. It coordinates an additional third zinc ion (By similarity).</text>
</comment>
<comment type="disruption phenotype">
    <text evidence="6 8">Severe pruning defect in ddaC neurons (PubMed:24068890). Also shows defects in ddaD and ddaE neuron pruning and in ddaF apoptosis (PubMed:24068890). RNAi-mediated knockdown results in apical detachment of scolopidial cells in Johnston's organ (PubMed:27331610).</text>
</comment>
<comment type="similarity">
    <text evidence="9">Belongs to the RING-box family.</text>
</comment>
<comment type="sequence caution" evidence="9">
    <conflict type="erroneous gene model prediction">
        <sequence resource="EMBL-CDS" id="CAA20888"/>
    </conflict>
</comment>
<feature type="chain" id="PRO_0000056017" description="RING-box protein 1A">
    <location>
        <begin position="1"/>
        <end position="108"/>
    </location>
</feature>
<feature type="zinc finger region" description="RING-type" evidence="3">
    <location>
        <begin position="53"/>
        <end position="98"/>
    </location>
</feature>
<feature type="binding site" evidence="2">
    <location>
        <position position="42"/>
    </location>
    <ligand>
        <name>Zn(2+)</name>
        <dbReference type="ChEBI" id="CHEBI:29105"/>
        <label>1</label>
    </ligand>
</feature>
<feature type="binding site" evidence="2">
    <location>
        <position position="45"/>
    </location>
    <ligand>
        <name>Zn(2+)</name>
        <dbReference type="ChEBI" id="CHEBI:29105"/>
        <label>1</label>
    </ligand>
</feature>
<feature type="binding site" evidence="2">
    <location>
        <position position="53"/>
    </location>
    <ligand>
        <name>Zn(2+)</name>
        <dbReference type="ChEBI" id="CHEBI:29105"/>
        <label>2</label>
    </ligand>
</feature>
<feature type="binding site" evidence="2">
    <location>
        <position position="56"/>
    </location>
    <ligand>
        <name>Zn(2+)</name>
        <dbReference type="ChEBI" id="CHEBI:29105"/>
        <label>2</label>
    </ligand>
</feature>
<feature type="binding site" evidence="2">
    <location>
        <position position="68"/>
    </location>
    <ligand>
        <name>Zn(2+)</name>
        <dbReference type="ChEBI" id="CHEBI:29105"/>
        <label>2</label>
    </ligand>
</feature>
<feature type="binding site" evidence="2">
    <location>
        <position position="75"/>
    </location>
    <ligand>
        <name>Zn(2+)</name>
        <dbReference type="ChEBI" id="CHEBI:29105"/>
        <label>3</label>
    </ligand>
</feature>
<feature type="binding site" evidence="2">
    <location>
        <position position="77"/>
    </location>
    <ligand>
        <name>Zn(2+)</name>
        <dbReference type="ChEBI" id="CHEBI:29105"/>
        <label>3</label>
    </ligand>
</feature>
<feature type="binding site" evidence="2">
    <location>
        <position position="80"/>
    </location>
    <ligand>
        <name>Zn(2+)</name>
        <dbReference type="ChEBI" id="CHEBI:29105"/>
        <label>1</label>
    </ligand>
</feature>
<feature type="binding site" evidence="2">
    <location>
        <position position="82"/>
    </location>
    <ligand>
        <name>Zn(2+)</name>
        <dbReference type="ChEBI" id="CHEBI:29105"/>
        <label>2</label>
    </ligand>
</feature>
<feature type="binding site" evidence="2">
    <location>
        <position position="94"/>
    </location>
    <ligand>
        <name>Zn(2+)</name>
        <dbReference type="ChEBI" id="CHEBI:29105"/>
        <label>3</label>
    </ligand>
</feature>
<feature type="binding site" evidence="2">
    <location>
        <position position="97"/>
    </location>
    <ligand>
        <name>Zn(2+)</name>
        <dbReference type="ChEBI" id="CHEBI:29105"/>
        <label>3</label>
    </ligand>
</feature>
<feature type="mutagenesis site" description="Loss of function; when associated with R-68." evidence="5">
    <original>N</original>
    <variation>C</variation>
    <location>
        <position position="59"/>
    </location>
</feature>
<feature type="mutagenesis site" description="Loss of function; when associated with C-59." evidence="5">
    <original>C</original>
    <variation>R</variation>
    <location>
        <position position="68"/>
    </location>
</feature>
<evidence type="ECO:0000250" key="1"/>
<evidence type="ECO:0000250" key="2">
    <source>
        <dbReference type="UniProtKB" id="P62878"/>
    </source>
</evidence>
<evidence type="ECO:0000255" key="3">
    <source>
        <dbReference type="PROSITE-ProRule" id="PRU00175"/>
    </source>
</evidence>
<evidence type="ECO:0000269" key="4">
    <source>
    </source>
</evidence>
<evidence type="ECO:0000269" key="5">
    <source>
    </source>
</evidence>
<evidence type="ECO:0000269" key="6">
    <source>
    </source>
</evidence>
<evidence type="ECO:0000269" key="7">
    <source>
    </source>
</evidence>
<evidence type="ECO:0000269" key="8">
    <source>
    </source>
</evidence>
<evidence type="ECO:0000305" key="9"/>
<gene>
    <name type="primary">Roc1a</name>
    <name type="ORF">CG16982</name>
</gene>
<proteinExistence type="evidence at protein level"/>
<sequence length="108" mass="12538">MEVDEDGYEVPSSSSKGDKKRFEVKKWNAVALWAWDIVVDNCAICRNHIMDLCIECQANQASATSEECTVAWGVCNHAFHFHCISRWLKTRQVCPLDNREWDFQKYGH</sequence>
<accession>Q9W5E1</accession>
<accession>O77429</accession>
<dbReference type="EMBL" id="AE014298">
    <property type="protein sequence ID" value="AAF45536.1"/>
    <property type="molecule type" value="Genomic_DNA"/>
</dbReference>
<dbReference type="EMBL" id="AL031581">
    <property type="protein sequence ID" value="CAA20888.1"/>
    <property type="status" value="ALT_SEQ"/>
    <property type="molecule type" value="Genomic_DNA"/>
</dbReference>
<dbReference type="EMBL" id="AY119265">
    <property type="protein sequence ID" value="AAM51125.1"/>
    <property type="molecule type" value="mRNA"/>
</dbReference>
<dbReference type="PIR" id="T13388">
    <property type="entry name" value="T13388"/>
</dbReference>
<dbReference type="RefSeq" id="NP_001138143.2">
    <property type="nucleotide sequence ID" value="NM_001144671.3"/>
</dbReference>
<dbReference type="RefSeq" id="NP_001284754.1">
    <property type="nucleotide sequence ID" value="NM_001297825.1"/>
</dbReference>
<dbReference type="RefSeq" id="NP_569852.1">
    <property type="nucleotide sequence ID" value="NM_130496.4"/>
</dbReference>
<dbReference type="SMR" id="Q9W5E1"/>
<dbReference type="BioGRID" id="57582">
    <property type="interactions" value="11"/>
</dbReference>
<dbReference type="ComplexPortal" id="CPX-2561">
    <property type="entry name" value="VHL-Elongin C-Elongin B E3 ubiquitin ligase complex"/>
</dbReference>
<dbReference type="ComplexPortal" id="CPX-2646">
    <property type="entry name" value="SCF-SLMB E3 ubiquitin ligase complex"/>
</dbReference>
<dbReference type="DIP" id="DIP-60717N"/>
<dbReference type="FunCoup" id="Q9W5E1">
    <property type="interactions" value="1646"/>
</dbReference>
<dbReference type="IntAct" id="Q9W5E1">
    <property type="interactions" value="2"/>
</dbReference>
<dbReference type="STRING" id="7227.FBpp0300874"/>
<dbReference type="DNASU" id="31014"/>
<dbReference type="EnsemblMetazoa" id="FBtr0070122">
    <property type="protein sequence ID" value="FBpp0070117"/>
    <property type="gene ID" value="FBgn0025638"/>
</dbReference>
<dbReference type="EnsemblMetazoa" id="FBtr0343564">
    <property type="protein sequence ID" value="FBpp0310165"/>
    <property type="gene ID" value="FBgn0025638"/>
</dbReference>
<dbReference type="GeneID" id="31014"/>
<dbReference type="KEGG" id="dme:Dmel_CG16982"/>
<dbReference type="UCSC" id="CG16982-RA">
    <property type="organism name" value="d. melanogaster"/>
</dbReference>
<dbReference type="AGR" id="FB:FBgn0025638"/>
<dbReference type="CTD" id="31014"/>
<dbReference type="FlyBase" id="FBgn0025638">
    <property type="gene designation" value="Roc1a"/>
</dbReference>
<dbReference type="VEuPathDB" id="VectorBase:FBgn0025638"/>
<dbReference type="HOGENOM" id="CLU_115512_2_1_1"/>
<dbReference type="InParanoid" id="Q9W5E1"/>
<dbReference type="OrthoDB" id="8962942at2759"/>
<dbReference type="PhylomeDB" id="Q9W5E1"/>
<dbReference type="Reactome" id="R-DME-110314">
    <property type="pathway name" value="Recognition of DNA damage by PCNA-containing replication complex"/>
</dbReference>
<dbReference type="Reactome" id="R-DME-1234176">
    <property type="pathway name" value="Oxygen-dependent proline hydroxylation of Hypoxia-inducible Factor Alpha"/>
</dbReference>
<dbReference type="Reactome" id="R-DME-195253">
    <property type="pathway name" value="Degradation of beta-catenin by the destruction complex"/>
</dbReference>
<dbReference type="Reactome" id="R-DME-209360">
    <property type="pathway name" value="Ubiquitination and proteolysis of phosphorylated CI"/>
</dbReference>
<dbReference type="Reactome" id="R-DME-209461">
    <property type="pathway name" value="Ubiquitination and degradation of phosphorylated ARM"/>
</dbReference>
<dbReference type="Reactome" id="R-DME-4641258">
    <property type="pathway name" value="Degradation of DVL"/>
</dbReference>
<dbReference type="Reactome" id="R-DME-5610780">
    <property type="pathway name" value="Degradation of GLI1 by the proteasome"/>
</dbReference>
<dbReference type="Reactome" id="R-DME-5610785">
    <property type="pathway name" value="GLI3 is processed to GLI3R by the proteasome"/>
</dbReference>
<dbReference type="Reactome" id="R-DME-5632684">
    <property type="pathway name" value="Hedgehog 'on' state"/>
</dbReference>
<dbReference type="Reactome" id="R-DME-5658442">
    <property type="pathway name" value="Regulation of RAS by GAPs"/>
</dbReference>
<dbReference type="Reactome" id="R-DME-5696394">
    <property type="pathway name" value="DNA Damage Recognition in GG-NER"/>
</dbReference>
<dbReference type="Reactome" id="R-DME-5696395">
    <property type="pathway name" value="Formation of Incision Complex in GG-NER"/>
</dbReference>
<dbReference type="Reactome" id="R-DME-5696400">
    <property type="pathway name" value="Dual Incision in GG-NER"/>
</dbReference>
<dbReference type="Reactome" id="R-DME-6781823">
    <property type="pathway name" value="Formation of TC-NER Pre-Incision Complex"/>
</dbReference>
<dbReference type="Reactome" id="R-DME-6782135">
    <property type="pathway name" value="Dual incision in TC-NER"/>
</dbReference>
<dbReference type="Reactome" id="R-DME-6782210">
    <property type="pathway name" value="Gap-filling DNA repair synthesis and ligation in TC-NER"/>
</dbReference>
<dbReference type="Reactome" id="R-DME-68949">
    <property type="pathway name" value="Orc1 removal from chromatin"/>
</dbReference>
<dbReference type="Reactome" id="R-DME-8854050">
    <property type="pathway name" value="FBXL7 down-regulates AURKA during mitotic entry and in early mitosis"/>
</dbReference>
<dbReference type="Reactome" id="R-DME-8939902">
    <property type="pathway name" value="Regulation of RUNX2 expression and activity"/>
</dbReference>
<dbReference type="Reactome" id="R-DME-8951664">
    <property type="pathway name" value="Neddylation"/>
</dbReference>
<dbReference type="Reactome" id="R-DME-9020702">
    <property type="pathway name" value="Interleukin-1 signaling"/>
</dbReference>
<dbReference type="Reactome" id="R-DME-9708530">
    <property type="pathway name" value="Regulation of BACH1 activity"/>
</dbReference>
<dbReference type="Reactome" id="R-DME-9755511">
    <property type="pathway name" value="KEAP1-NFE2L2 pathway"/>
</dbReference>
<dbReference type="Reactome" id="R-DME-9762114">
    <property type="pathway name" value="GSK3B and BTRC:CUL1-mediated-degradation of NFE2L2"/>
</dbReference>
<dbReference type="Reactome" id="R-DME-983168">
    <property type="pathway name" value="Antigen processing: Ubiquitination &amp; Proteasome degradation"/>
</dbReference>
<dbReference type="SignaLink" id="Q9W5E1"/>
<dbReference type="UniPathway" id="UPA00143"/>
<dbReference type="BioGRID-ORCS" id="31014">
    <property type="hits" value="1 hit in 3 CRISPR screens"/>
</dbReference>
<dbReference type="GenomeRNAi" id="31014"/>
<dbReference type="PRO" id="PR:Q9W5E1"/>
<dbReference type="Proteomes" id="UP000000803">
    <property type="component" value="Chromosome X"/>
</dbReference>
<dbReference type="Bgee" id="FBgn0025638">
    <property type="expression patterns" value="Expressed in adult middle midgut class I enteroendocrine cell in adult midgut (Drosophila) and 245 other cell types or tissues"/>
</dbReference>
<dbReference type="ExpressionAtlas" id="Q9W5E1">
    <property type="expression patterns" value="baseline and differential"/>
</dbReference>
<dbReference type="GO" id="GO:0031462">
    <property type="term" value="C:Cul2-RING ubiquitin ligase complex"/>
    <property type="evidence" value="ECO:0000314"/>
    <property type="project" value="FlyBase"/>
</dbReference>
<dbReference type="GO" id="GO:0031463">
    <property type="term" value="C:Cul3-RING ubiquitin ligase complex"/>
    <property type="evidence" value="ECO:0000314"/>
    <property type="project" value="FlyBase"/>
</dbReference>
<dbReference type="GO" id="GO:0080008">
    <property type="term" value="C:Cul4-RING E3 ubiquitin ligase complex"/>
    <property type="evidence" value="ECO:0000314"/>
    <property type="project" value="FlyBase"/>
</dbReference>
<dbReference type="GO" id="GO:0031461">
    <property type="term" value="C:cullin-RING ubiquitin ligase complex"/>
    <property type="evidence" value="ECO:0000318"/>
    <property type="project" value="GO_Central"/>
</dbReference>
<dbReference type="GO" id="GO:0005829">
    <property type="term" value="C:cytosol"/>
    <property type="evidence" value="ECO:0000304"/>
    <property type="project" value="Reactome"/>
</dbReference>
<dbReference type="GO" id="GO:0005634">
    <property type="term" value="C:nucleus"/>
    <property type="evidence" value="ECO:0000314"/>
    <property type="project" value="UniProtKB"/>
</dbReference>
<dbReference type="GO" id="GO:0019005">
    <property type="term" value="C:SCF ubiquitin ligase complex"/>
    <property type="evidence" value="ECO:0000314"/>
    <property type="project" value="UniProtKB"/>
</dbReference>
<dbReference type="GO" id="GO:0097602">
    <property type="term" value="F:cullin family protein binding"/>
    <property type="evidence" value="ECO:0000353"/>
    <property type="project" value="FlyBase"/>
</dbReference>
<dbReference type="GO" id="GO:0061663">
    <property type="term" value="F:NEDD8 ligase activity"/>
    <property type="evidence" value="ECO:0000250"/>
    <property type="project" value="FlyBase"/>
</dbReference>
<dbReference type="GO" id="GO:0061630">
    <property type="term" value="F:ubiquitin protein ligase activity"/>
    <property type="evidence" value="ECO:0000314"/>
    <property type="project" value="FlyBase"/>
</dbReference>
<dbReference type="GO" id="GO:0004842">
    <property type="term" value="F:ubiquitin-protein transferase activity"/>
    <property type="evidence" value="ECO:0000316"/>
    <property type="project" value="FlyBase"/>
</dbReference>
<dbReference type="GO" id="GO:0008270">
    <property type="term" value="F:zinc ion binding"/>
    <property type="evidence" value="ECO:0000255"/>
    <property type="project" value="FlyBase"/>
</dbReference>
<dbReference type="GO" id="GO:0008283">
    <property type="term" value="P:cell population proliferation"/>
    <property type="evidence" value="ECO:0000315"/>
    <property type="project" value="FlyBase"/>
</dbReference>
<dbReference type="GO" id="GO:0090090">
    <property type="term" value="P:negative regulation of canonical Wnt signaling pathway"/>
    <property type="evidence" value="ECO:0000315"/>
    <property type="project" value="FlyBase"/>
</dbReference>
<dbReference type="GO" id="GO:0046627">
    <property type="term" value="P:negative regulation of insulin receptor signaling pathway"/>
    <property type="evidence" value="ECO:0000353"/>
    <property type="project" value="FlyBase"/>
</dbReference>
<dbReference type="GO" id="GO:0045879">
    <property type="term" value="P:negative regulation of smoothened signaling pathway"/>
    <property type="evidence" value="ECO:0000315"/>
    <property type="project" value="FlyBase"/>
</dbReference>
<dbReference type="GO" id="GO:1904801">
    <property type="term" value="P:positive regulation of neuron remodeling"/>
    <property type="evidence" value="ECO:0000315"/>
    <property type="project" value="FlyBase"/>
</dbReference>
<dbReference type="GO" id="GO:0032436">
    <property type="term" value="P:positive regulation of proteasomal ubiquitin-dependent protein catabolic process"/>
    <property type="evidence" value="ECO:0000315"/>
    <property type="project" value="FlyBase"/>
</dbReference>
<dbReference type="GO" id="GO:0045116">
    <property type="term" value="P:protein neddylation"/>
    <property type="evidence" value="ECO:0000250"/>
    <property type="project" value="FlyBase"/>
</dbReference>
<dbReference type="GO" id="GO:0016567">
    <property type="term" value="P:protein ubiquitination"/>
    <property type="evidence" value="ECO:0000314"/>
    <property type="project" value="FlyBase"/>
</dbReference>
<dbReference type="GO" id="GO:0006508">
    <property type="term" value="P:proteolysis"/>
    <property type="evidence" value="ECO:0000315"/>
    <property type="project" value="FlyBase"/>
</dbReference>
<dbReference type="GO" id="GO:0006511">
    <property type="term" value="P:ubiquitin-dependent protein catabolic process"/>
    <property type="evidence" value="ECO:0000318"/>
    <property type="project" value="GO_Central"/>
</dbReference>
<dbReference type="GO" id="GO:0016032">
    <property type="term" value="P:viral process"/>
    <property type="evidence" value="ECO:0000305"/>
    <property type="project" value="FlyBase"/>
</dbReference>
<dbReference type="CDD" id="cd16485">
    <property type="entry name" value="mRING-H2-C3H2C2D_RBX1"/>
    <property type="match status" value="1"/>
</dbReference>
<dbReference type="FunFam" id="3.30.40.10:FF:000010">
    <property type="entry name" value="E3 ubiquitin-protein ligase RBX1"/>
    <property type="match status" value="1"/>
</dbReference>
<dbReference type="Gene3D" id="3.30.40.10">
    <property type="entry name" value="Zinc/RING finger domain, C3HC4 (zinc finger)"/>
    <property type="match status" value="1"/>
</dbReference>
<dbReference type="InterPro" id="IPR051031">
    <property type="entry name" value="RING-box_E3_Ubiquitin_Ligase"/>
</dbReference>
<dbReference type="InterPro" id="IPR001841">
    <property type="entry name" value="Znf_RING"/>
</dbReference>
<dbReference type="InterPro" id="IPR013083">
    <property type="entry name" value="Znf_RING/FYVE/PHD"/>
</dbReference>
<dbReference type="InterPro" id="IPR024766">
    <property type="entry name" value="Znf_RING_H2"/>
</dbReference>
<dbReference type="PANTHER" id="PTHR11210">
    <property type="entry name" value="RING BOX"/>
    <property type="match status" value="1"/>
</dbReference>
<dbReference type="Pfam" id="PF12678">
    <property type="entry name" value="zf-rbx1"/>
    <property type="match status" value="1"/>
</dbReference>
<dbReference type="SUPFAM" id="SSF57850">
    <property type="entry name" value="RING/U-box"/>
    <property type="match status" value="1"/>
</dbReference>
<dbReference type="PROSITE" id="PS50089">
    <property type="entry name" value="ZF_RING_2"/>
    <property type="match status" value="1"/>
</dbReference>
<keyword id="KW-0963">Cytoplasm</keyword>
<keyword id="KW-0217">Developmental protein</keyword>
<keyword id="KW-0479">Metal-binding</keyword>
<keyword id="KW-0539">Nucleus</keyword>
<keyword id="KW-1185">Reference proteome</keyword>
<keyword id="KW-0833">Ubl conjugation pathway</keyword>
<keyword id="KW-0862">Zinc</keyword>
<keyword id="KW-0863">Zinc-finger</keyword>
<name>RBX1A_DROME</name>
<protein>
    <recommendedName>
        <fullName>RING-box protein 1A</fullName>
    </recommendedName>
    <alternativeName>
        <fullName>Regulator of cullins 1a</fullName>
    </alternativeName>
    <alternativeName>
        <fullName>dRbx1</fullName>
    </alternativeName>
</protein>
<reference key="1">
    <citation type="journal article" date="2000" name="Science">
        <title>The genome sequence of Drosophila melanogaster.</title>
        <authorList>
            <person name="Adams M.D."/>
            <person name="Celniker S.E."/>
            <person name="Holt R.A."/>
            <person name="Evans C.A."/>
            <person name="Gocayne J.D."/>
            <person name="Amanatides P.G."/>
            <person name="Scherer S.E."/>
            <person name="Li P.W."/>
            <person name="Hoskins R.A."/>
            <person name="Galle R.F."/>
            <person name="George R.A."/>
            <person name="Lewis S.E."/>
            <person name="Richards S."/>
            <person name="Ashburner M."/>
            <person name="Henderson S.N."/>
            <person name="Sutton G.G."/>
            <person name="Wortman J.R."/>
            <person name="Yandell M.D."/>
            <person name="Zhang Q."/>
            <person name="Chen L.X."/>
            <person name="Brandon R.C."/>
            <person name="Rogers Y.-H.C."/>
            <person name="Blazej R.G."/>
            <person name="Champe M."/>
            <person name="Pfeiffer B.D."/>
            <person name="Wan K.H."/>
            <person name="Doyle C."/>
            <person name="Baxter E.G."/>
            <person name="Helt G."/>
            <person name="Nelson C.R."/>
            <person name="Miklos G.L.G."/>
            <person name="Abril J.F."/>
            <person name="Agbayani A."/>
            <person name="An H.-J."/>
            <person name="Andrews-Pfannkoch C."/>
            <person name="Baldwin D."/>
            <person name="Ballew R.M."/>
            <person name="Basu A."/>
            <person name="Baxendale J."/>
            <person name="Bayraktaroglu L."/>
            <person name="Beasley E.M."/>
            <person name="Beeson K.Y."/>
            <person name="Benos P.V."/>
            <person name="Berman B.P."/>
            <person name="Bhandari D."/>
            <person name="Bolshakov S."/>
            <person name="Borkova D."/>
            <person name="Botchan M.R."/>
            <person name="Bouck J."/>
            <person name="Brokstein P."/>
            <person name="Brottier P."/>
            <person name="Burtis K.C."/>
            <person name="Busam D.A."/>
            <person name="Butler H."/>
            <person name="Cadieu E."/>
            <person name="Center A."/>
            <person name="Chandra I."/>
            <person name="Cherry J.M."/>
            <person name="Cawley S."/>
            <person name="Dahlke C."/>
            <person name="Davenport L.B."/>
            <person name="Davies P."/>
            <person name="de Pablos B."/>
            <person name="Delcher A."/>
            <person name="Deng Z."/>
            <person name="Mays A.D."/>
            <person name="Dew I."/>
            <person name="Dietz S.M."/>
            <person name="Dodson K."/>
            <person name="Doup L.E."/>
            <person name="Downes M."/>
            <person name="Dugan-Rocha S."/>
            <person name="Dunkov B.C."/>
            <person name="Dunn P."/>
            <person name="Durbin K.J."/>
            <person name="Evangelista C.C."/>
            <person name="Ferraz C."/>
            <person name="Ferriera S."/>
            <person name="Fleischmann W."/>
            <person name="Fosler C."/>
            <person name="Gabrielian A.E."/>
            <person name="Garg N.S."/>
            <person name="Gelbart W.M."/>
            <person name="Glasser K."/>
            <person name="Glodek A."/>
            <person name="Gong F."/>
            <person name="Gorrell J.H."/>
            <person name="Gu Z."/>
            <person name="Guan P."/>
            <person name="Harris M."/>
            <person name="Harris N.L."/>
            <person name="Harvey D.A."/>
            <person name="Heiman T.J."/>
            <person name="Hernandez J.R."/>
            <person name="Houck J."/>
            <person name="Hostin D."/>
            <person name="Houston K.A."/>
            <person name="Howland T.J."/>
            <person name="Wei M.-H."/>
            <person name="Ibegwam C."/>
            <person name="Jalali M."/>
            <person name="Kalush F."/>
            <person name="Karpen G.H."/>
            <person name="Ke Z."/>
            <person name="Kennison J.A."/>
            <person name="Ketchum K.A."/>
            <person name="Kimmel B.E."/>
            <person name="Kodira C.D."/>
            <person name="Kraft C.L."/>
            <person name="Kravitz S."/>
            <person name="Kulp D."/>
            <person name="Lai Z."/>
            <person name="Lasko P."/>
            <person name="Lei Y."/>
            <person name="Levitsky A.A."/>
            <person name="Li J.H."/>
            <person name="Li Z."/>
            <person name="Liang Y."/>
            <person name="Lin X."/>
            <person name="Liu X."/>
            <person name="Mattei B."/>
            <person name="McIntosh T.C."/>
            <person name="McLeod M.P."/>
            <person name="McPherson D."/>
            <person name="Merkulov G."/>
            <person name="Milshina N.V."/>
            <person name="Mobarry C."/>
            <person name="Morris J."/>
            <person name="Moshrefi A."/>
            <person name="Mount S.M."/>
            <person name="Moy M."/>
            <person name="Murphy B."/>
            <person name="Murphy L."/>
            <person name="Muzny D.M."/>
            <person name="Nelson D.L."/>
            <person name="Nelson D.R."/>
            <person name="Nelson K.A."/>
            <person name="Nixon K."/>
            <person name="Nusskern D.R."/>
            <person name="Pacleb J.M."/>
            <person name="Palazzolo M."/>
            <person name="Pittman G.S."/>
            <person name="Pan S."/>
            <person name="Pollard J."/>
            <person name="Puri V."/>
            <person name="Reese M.G."/>
            <person name="Reinert K."/>
            <person name="Remington K."/>
            <person name="Saunders R.D.C."/>
            <person name="Scheeler F."/>
            <person name="Shen H."/>
            <person name="Shue B.C."/>
            <person name="Siden-Kiamos I."/>
            <person name="Simpson M."/>
            <person name="Skupski M.P."/>
            <person name="Smith T.J."/>
            <person name="Spier E."/>
            <person name="Spradling A.C."/>
            <person name="Stapleton M."/>
            <person name="Strong R."/>
            <person name="Sun E."/>
            <person name="Svirskas R."/>
            <person name="Tector C."/>
            <person name="Turner R."/>
            <person name="Venter E."/>
            <person name="Wang A.H."/>
            <person name="Wang X."/>
            <person name="Wang Z.-Y."/>
            <person name="Wassarman D.A."/>
            <person name="Weinstock G.M."/>
            <person name="Weissenbach J."/>
            <person name="Williams S.M."/>
            <person name="Woodage T."/>
            <person name="Worley K.C."/>
            <person name="Wu D."/>
            <person name="Yang S."/>
            <person name="Yao Q.A."/>
            <person name="Ye J."/>
            <person name="Yeh R.-F."/>
            <person name="Zaveri J.S."/>
            <person name="Zhan M."/>
            <person name="Zhang G."/>
            <person name="Zhao Q."/>
            <person name="Zheng L."/>
            <person name="Zheng X.H."/>
            <person name="Zhong F.N."/>
            <person name="Zhong W."/>
            <person name="Zhou X."/>
            <person name="Zhu S.C."/>
            <person name="Zhu X."/>
            <person name="Smith H.O."/>
            <person name="Gibbs R.A."/>
            <person name="Myers E.W."/>
            <person name="Rubin G.M."/>
            <person name="Venter J.C."/>
        </authorList>
    </citation>
    <scope>NUCLEOTIDE SEQUENCE [LARGE SCALE GENOMIC DNA]</scope>
    <source>
        <strain>Berkeley</strain>
    </source>
</reference>
<reference key="2">
    <citation type="journal article" date="2002" name="Genome Biol.">
        <title>Annotation of the Drosophila melanogaster euchromatic genome: a systematic review.</title>
        <authorList>
            <person name="Misra S."/>
            <person name="Crosby M.A."/>
            <person name="Mungall C.J."/>
            <person name="Matthews B.B."/>
            <person name="Campbell K.S."/>
            <person name="Hradecky P."/>
            <person name="Huang Y."/>
            <person name="Kaminker J.S."/>
            <person name="Millburn G.H."/>
            <person name="Prochnik S.E."/>
            <person name="Smith C.D."/>
            <person name="Tupy J.L."/>
            <person name="Whitfield E.J."/>
            <person name="Bayraktaroglu L."/>
            <person name="Berman B.P."/>
            <person name="Bettencourt B.R."/>
            <person name="Celniker S.E."/>
            <person name="de Grey A.D.N.J."/>
            <person name="Drysdale R.A."/>
            <person name="Harris N.L."/>
            <person name="Richter J."/>
            <person name="Russo S."/>
            <person name="Schroeder A.J."/>
            <person name="Shu S.Q."/>
            <person name="Stapleton M."/>
            <person name="Yamada C."/>
            <person name="Ashburner M."/>
            <person name="Gelbart W.M."/>
            <person name="Rubin G.M."/>
            <person name="Lewis S.E."/>
        </authorList>
    </citation>
    <scope>GENOME REANNOTATION</scope>
    <source>
        <strain>Berkeley</strain>
    </source>
</reference>
<reference key="3">
    <citation type="journal article" date="2000" name="Science">
        <title>From sequence to chromosome: the tip of the X chromosome of D. melanogaster.</title>
        <authorList>
            <person name="Benos P.V."/>
            <person name="Gatt M.K."/>
            <person name="Ashburner M."/>
            <person name="Murphy L."/>
            <person name="Harris D."/>
            <person name="Barrell B.G."/>
            <person name="Ferraz C."/>
            <person name="Vidal S."/>
            <person name="Brun C."/>
            <person name="Demailles J."/>
            <person name="Cadieu E."/>
            <person name="Dreano S."/>
            <person name="Gloux S."/>
            <person name="Lelaure V."/>
            <person name="Mottier S."/>
            <person name="Galibert F."/>
            <person name="Borkova D."/>
            <person name="Minana B."/>
            <person name="Kafatos F.C."/>
            <person name="Louis C."/>
            <person name="Siden-Kiamos I."/>
            <person name="Bolshakov S."/>
            <person name="Papagiannakis G."/>
            <person name="Spanos L."/>
            <person name="Cox S."/>
            <person name="Madueno E."/>
            <person name="de Pablos B."/>
            <person name="Modolell J."/>
            <person name="Peter A."/>
            <person name="Schoettler P."/>
            <person name="Werner M."/>
            <person name="Mourkioti F."/>
            <person name="Beinert N."/>
            <person name="Dowe G."/>
            <person name="Schaefer U."/>
            <person name="Jaeckle H."/>
            <person name="Bucheton A."/>
            <person name="Callister D.M."/>
            <person name="Campbell L.A."/>
            <person name="Darlamitsou A."/>
            <person name="Henderson N.S."/>
            <person name="McMillan P.J."/>
            <person name="Salles C."/>
            <person name="Tait E.A."/>
            <person name="Valenti P."/>
            <person name="Saunders R.D.C."/>
            <person name="Glover D.M."/>
        </authorList>
    </citation>
    <scope>NUCLEOTIDE SEQUENCE [LARGE SCALE GENOMIC DNA]</scope>
    <source>
        <strain>Oregon-R</strain>
    </source>
</reference>
<reference key="4">
    <citation type="journal article" date="2002" name="Genome Biol.">
        <title>A Drosophila full-length cDNA resource.</title>
        <authorList>
            <person name="Stapleton M."/>
            <person name="Carlson J.W."/>
            <person name="Brokstein P."/>
            <person name="Yu C."/>
            <person name="Champe M."/>
            <person name="George R.A."/>
            <person name="Guarin H."/>
            <person name="Kronmiller B."/>
            <person name="Pacleb J.M."/>
            <person name="Park S."/>
            <person name="Wan K.H."/>
            <person name="Rubin G.M."/>
            <person name="Celniker S.E."/>
        </authorList>
    </citation>
    <scope>NUCLEOTIDE SEQUENCE [LARGE SCALE MRNA]</scope>
    <source>
        <strain>Berkeley</strain>
        <tissue>Embryo</tissue>
    </source>
</reference>
<reference key="5">
    <citation type="journal article" date="2002" name="Dev. Cell">
        <title>Drosophila Roc1a encodes a RING-H2 protein with a unique function in processing the Hh signal transducer Ci by the SCF E3 ubiquitin ligase.</title>
        <authorList>
            <person name="Noureddine M.A."/>
            <person name="Donaldson T.D."/>
            <person name="Thacker S.A."/>
            <person name="Duronio R.J."/>
        </authorList>
    </citation>
    <scope>FUNCTION</scope>
    <scope>TISSUE SPECIFICITY</scope>
    <scope>DEVELOPMENTAL STAGE</scope>
    <scope>MUTAGENESIS OF ASN-59 AND CYS-68</scope>
</reference>
<reference key="6">
    <citation type="journal article" date="2001" name="Biochem. Biophys. Res. Commun.">
        <title>Occurrence of a putative SCF ubiquitin ligase complex in Drosophila.</title>
        <authorList>
            <person name="Bocca S.N."/>
            <person name="Muzzopappa M."/>
            <person name="Silberstein S."/>
            <person name="Wappner P."/>
        </authorList>
    </citation>
    <scope>INTERACTION WITH CUL1 AND SLMB</scope>
</reference>
<reference key="7">
    <citation type="journal article" date="2003" name="Trends Genet.">
        <title>Control of protein degradation by E3 ubiquitin ligases in Drosophila eye development.</title>
        <authorList>
            <person name="Ou C.-Y."/>
            <person name="Pi H."/>
            <person name="Chien C.-T."/>
        </authorList>
    </citation>
    <scope>REVIEW ON E3 UBIQUITIN LIGASE COMPLEXES</scope>
</reference>
<reference key="8">
    <citation type="journal article" date="2013" name="PLoS Biol.">
        <title>A Cullin1-based SCF E3 ubiquitin ligase targets the InR/PI3K/TOR pathway to regulate neuronal pruning.</title>
        <authorList>
            <person name="Wong J.J."/>
            <person name="Li S."/>
            <person name="Lim E.K."/>
            <person name="Wang Y."/>
            <person name="Wang C."/>
            <person name="Zhang H."/>
            <person name="Kirilly D."/>
            <person name="Wu C."/>
            <person name="Liou Y.C."/>
            <person name="Wang H."/>
            <person name="Yu F."/>
        </authorList>
    </citation>
    <scope>FUNCTION</scope>
    <scope>IDENTIFICATION IN SCF COMPLEX</scope>
    <scope>DISRUPTION PHENOTYPE</scope>
</reference>
<reference key="9">
    <citation type="journal article" date="2014" name="EMBO Rep.">
        <title>The SCFSlimb E3 ligase complex regulates asymmetric division to inhibit neuroblast overgrowth.</title>
        <authorList>
            <person name="Li S."/>
            <person name="Wang C."/>
            <person name="Sandanaraj E."/>
            <person name="Aw S.S."/>
            <person name="Koe C.T."/>
            <person name="Wong J.J."/>
            <person name="Yu F."/>
            <person name="Ang B.T."/>
            <person name="Tang C."/>
            <person name="Wang H."/>
        </authorList>
    </citation>
    <scope>FUNCTION</scope>
    <scope>SUBUNIT</scope>
    <scope>DISRUPTION PHENOTYPE</scope>
</reference>
<reference key="10">
    <citation type="journal article" date="2016" name="Elife">
        <title>The E3 ligase Ubr3 regulates Usher syndrome and MYH9 disorder proteins in the auditory organs of Drosophila and mammals.</title>
        <authorList>
            <person name="Li T."/>
            <person name="Giagtzoglou N."/>
            <person name="Eberl D.F."/>
            <person name="Jaiswal S.N."/>
            <person name="Cai T."/>
            <person name="Godt D."/>
            <person name="Groves A.K."/>
            <person name="Bellen H.J."/>
        </authorList>
    </citation>
    <scope>DISRUPTION PHENOTYPE</scope>
</reference>
<organism>
    <name type="scientific">Drosophila melanogaster</name>
    <name type="common">Fruit fly</name>
    <dbReference type="NCBI Taxonomy" id="7227"/>
    <lineage>
        <taxon>Eukaryota</taxon>
        <taxon>Metazoa</taxon>
        <taxon>Ecdysozoa</taxon>
        <taxon>Arthropoda</taxon>
        <taxon>Hexapoda</taxon>
        <taxon>Insecta</taxon>
        <taxon>Pterygota</taxon>
        <taxon>Neoptera</taxon>
        <taxon>Endopterygota</taxon>
        <taxon>Diptera</taxon>
        <taxon>Brachycera</taxon>
        <taxon>Muscomorpha</taxon>
        <taxon>Ephydroidea</taxon>
        <taxon>Drosophilidae</taxon>
        <taxon>Drosophila</taxon>
        <taxon>Sophophora</taxon>
    </lineage>
</organism>